<reference key="1">
    <citation type="journal article" date="2012" name="PLoS ONE">
        <title>Two novel heat-soluble protein families abundantly expressed in an anhydrobiotic tardigrade.</title>
        <authorList>
            <person name="Yamaguchi A."/>
            <person name="Tanaka S."/>
            <person name="Yamaguchi S."/>
            <person name="Kuwahara H."/>
            <person name="Takamura C."/>
            <person name="Imajoh-Ohmi S."/>
            <person name="Horikawa D.D."/>
            <person name="Toyoda A."/>
            <person name="Katayama T."/>
            <person name="Arakawa K."/>
            <person name="Fujiyama A."/>
            <person name="Kubo T."/>
            <person name="Kunieda T."/>
        </authorList>
    </citation>
    <scope>DOMAIN</scope>
</reference>
<reference key="2">
    <citation type="journal article" date="2017" name="Mol. Cell">
        <title>Tardigrades use intrinsically disordered proteins to survive desiccation.</title>
        <authorList>
            <person name="Boothby T.C."/>
            <person name="Tapia H."/>
            <person name="Brozena A.H."/>
            <person name="Piszkiewicz S."/>
            <person name="Smith A.E."/>
            <person name="Giovannini I."/>
            <person name="Rebecchi L."/>
            <person name="Pielak G.J."/>
            <person name="Koshland D."/>
            <person name="Goldstein B."/>
        </authorList>
    </citation>
    <scope>FUNCTION</scope>
    <scope>INDUCTION</scope>
    <scope>DISRUPTION PHENOTYPE</scope>
</reference>
<sequence length="172" mass="19346">MSRTIVALILLGLAALAAADHHEGHGAEKEWAGKAWLGKWVSTDRSENWDAFVEALGLPLAAYGGNHKTVHKLWKEGDHYHHQIIIADKSYKQDIQFKLGEEGRTAHNGTEVTFKYTEVGDNLQNEVKIPSKNKTISDSYVVKGDELEKTYKINDVVAKRWYKKHAHEPSTA</sequence>
<proteinExistence type="evidence at transcript level"/>
<evidence type="ECO:0000255" key="1"/>
<evidence type="ECO:0000255" key="2">
    <source>
        <dbReference type="PROSITE-ProRule" id="PRU00498"/>
    </source>
</evidence>
<evidence type="ECO:0000269" key="3">
    <source>
    </source>
</evidence>
<evidence type="ECO:0000303" key="4">
    <source>
    </source>
</evidence>
<evidence type="ECO:0000303" key="5">
    <source>
    </source>
</evidence>
<evidence type="ECO:0000305" key="6"/>
<evidence type="ECO:0000305" key="7">
    <source>
    </source>
</evidence>
<evidence type="ECO:0000305" key="8">
    <source>
    </source>
</evidence>
<protein>
    <recommendedName>
        <fullName evidence="5">Secretory-abundant heat soluble protein 64681</fullName>
        <shortName evidence="5">SAHS 63681</shortName>
    </recommendedName>
    <alternativeName>
        <fullName evidence="4">Secretory-abundant heat soluble protein c</fullName>
        <shortName evidence="4">SAHS-c</shortName>
    </alternativeName>
    <alternativeName>
        <fullName evidence="5">Tardigrade-specific intrinsically disordered protein SAHS 64681</fullName>
        <shortName evidence="5">TDP SAHS 64681</shortName>
    </alternativeName>
</protein>
<organism evidence="5">
    <name type="scientific">Hypsibius exemplaris</name>
    <name type="common">Freshwater tardigrade</name>
    <dbReference type="NCBI Taxonomy" id="2072580"/>
    <lineage>
        <taxon>Eukaryota</taxon>
        <taxon>Metazoa</taxon>
        <taxon>Ecdysozoa</taxon>
        <taxon>Tardigrada</taxon>
        <taxon>Eutardigrada</taxon>
        <taxon>Parachela</taxon>
        <taxon>Hypsibioidea</taxon>
        <taxon>Hypsibiidae</taxon>
        <taxon>Hypsibius</taxon>
    </lineage>
</organism>
<keyword id="KW-0325">Glycoprotein</keyword>
<keyword id="KW-0964">Secreted</keyword>
<keyword id="KW-0732">Signal</keyword>
<keyword id="KW-0346">Stress response</keyword>
<accession>P0CU41</accession>
<name>SAHS3_HYPEX</name>
<comment type="function">
    <text evidence="3">Secreted heat soluble protein acting as a molecular shield in water-deficient condition (PubMed:28306513). Tardigrade-specific intrinsically disordered proteins (TDPs) are essential for desiccation tolerance by forming non-crystalline amorphous solids upon desiccation, and this vitrified state mirrors their protective capabilities (PubMed:28306513).</text>
</comment>
<comment type="subcellular location">
    <subcellularLocation>
        <location evidence="8">Secreted</location>
    </subcellularLocation>
</comment>
<comment type="induction">
    <text evidence="3">Expression is highly induced during desiccation (PubMed:28306513).</text>
</comment>
<comment type="domain">
    <text evidence="7">SAHS-c1, SAHS-c2 and SAHS-c3 are 3 highly conserved regions within the SAHS protein family (PubMed:22937162).</text>
</comment>
<comment type="disruption phenotype">
    <text evidence="3">Affects slightly survival under dry conditions but does not affect survival under frozen conditions (PubMed:28306513).</text>
</comment>
<comment type="miscellaneous">
    <text evidence="3">Trehalose, a disaccharide essential for several organisms to survive drying, is detected at low levels or not at all in some tardigrade species, indicating that tardigrades possess potentially novel mechanisms for surviving desiccation involving tardigrade-specific intrinsically disordered proteins (TDPs) (PubMed:28306513).</text>
</comment>
<comment type="similarity">
    <text evidence="6">Belongs to the Secretory-abundant heat soluble protein (SAHS) family.</text>
</comment>
<feature type="signal peptide" evidence="1">
    <location>
        <begin position="1"/>
        <end position="19"/>
    </location>
</feature>
<feature type="chain" id="PRO_0000440185" description="Secretory-abundant heat soluble protein 64681" evidence="1">
    <location>
        <begin position="20"/>
        <end position="172"/>
    </location>
</feature>
<feature type="region of interest" description="SAHS-c1" evidence="7">
    <location>
        <begin position="30"/>
        <end position="59"/>
    </location>
</feature>
<feature type="region of interest" description="SAHS-c2" evidence="7">
    <location>
        <begin position="74"/>
        <end position="102"/>
    </location>
</feature>
<feature type="region of interest" description="SAHS-c3" evidence="7">
    <location>
        <begin position="115"/>
        <end position="164"/>
    </location>
</feature>
<feature type="glycosylation site" description="N-linked (GlcNAc...) asparagine" evidence="2">
    <location>
        <position position="108"/>
    </location>
</feature>
<feature type="glycosylation site" description="N-linked (GlcNAc...) asparagine" evidence="2">
    <location>
        <position position="133"/>
    </location>
</feature>
<dbReference type="SMR" id="P0CU41"/>
<dbReference type="GlyCosmos" id="P0CU41">
    <property type="glycosylation" value="2 sites, No reported glycans"/>
</dbReference>
<dbReference type="OrthoDB" id="354351at2759"/>
<dbReference type="GO" id="GO:0005576">
    <property type="term" value="C:extracellular region"/>
    <property type="evidence" value="ECO:0007669"/>
    <property type="project" value="UniProtKB-SubCell"/>
</dbReference>
<dbReference type="GO" id="GO:0008289">
    <property type="term" value="F:lipid binding"/>
    <property type="evidence" value="ECO:0007669"/>
    <property type="project" value="InterPro"/>
</dbReference>
<dbReference type="CDD" id="cd00742">
    <property type="entry name" value="FABP"/>
    <property type="match status" value="1"/>
</dbReference>
<dbReference type="Gene3D" id="2.40.128.20">
    <property type="match status" value="1"/>
</dbReference>
<dbReference type="InterPro" id="IPR012674">
    <property type="entry name" value="Calycin"/>
</dbReference>
<dbReference type="InterPro" id="IPR000463">
    <property type="entry name" value="Fatty_acid-bd"/>
</dbReference>
<dbReference type="PRINTS" id="PR00178">
    <property type="entry name" value="FATTYACIDBP"/>
</dbReference>
<dbReference type="SUPFAM" id="SSF50814">
    <property type="entry name" value="Lipocalins"/>
    <property type="match status" value="1"/>
</dbReference>
<gene>
    <name evidence="5" type="primary">SAHS 64681</name>
    <name evidence="4" type="synonym">SAHS-c</name>
</gene>